<reference key="1">
    <citation type="submission" date="2008-10" db="EMBL/GenBank/DDBJ databases">
        <title>Genome sequence of Bacillus cereus AH820.</title>
        <authorList>
            <person name="Dodson R.J."/>
            <person name="Durkin A.S."/>
            <person name="Rosovitz M.J."/>
            <person name="Rasko D.A."/>
            <person name="Hoffmaster A."/>
            <person name="Ravel J."/>
            <person name="Sutton G."/>
        </authorList>
    </citation>
    <scope>NUCLEOTIDE SEQUENCE [LARGE SCALE GENOMIC DNA]</scope>
    <source>
        <strain>AH820</strain>
    </source>
</reference>
<dbReference type="EMBL" id="CP001283">
    <property type="protein sequence ID" value="ACK90177.1"/>
    <property type="molecule type" value="Genomic_DNA"/>
</dbReference>
<dbReference type="RefSeq" id="WP_000625507.1">
    <property type="nucleotide sequence ID" value="NC_011773.1"/>
</dbReference>
<dbReference type="KEGG" id="bcu:BCAH820_4710"/>
<dbReference type="HOGENOM" id="CLU_125889_1_0_9"/>
<dbReference type="Proteomes" id="UP000001363">
    <property type="component" value="Chromosome"/>
</dbReference>
<dbReference type="GO" id="GO:0005886">
    <property type="term" value="C:plasma membrane"/>
    <property type="evidence" value="ECO:0007669"/>
    <property type="project" value="UniProtKB-SubCell"/>
</dbReference>
<dbReference type="HAMAP" id="MF_01874">
    <property type="entry name" value="UPF0756"/>
    <property type="match status" value="1"/>
</dbReference>
<dbReference type="InterPro" id="IPR007382">
    <property type="entry name" value="UPF0756_TM"/>
</dbReference>
<dbReference type="PANTHER" id="PTHR38452">
    <property type="entry name" value="UPF0756 MEMBRANE PROTEIN YEAL"/>
    <property type="match status" value="1"/>
</dbReference>
<dbReference type="PANTHER" id="PTHR38452:SF1">
    <property type="entry name" value="UPF0756 MEMBRANE PROTEIN YEAL"/>
    <property type="match status" value="1"/>
</dbReference>
<dbReference type="Pfam" id="PF04284">
    <property type="entry name" value="DUF441"/>
    <property type="match status" value="1"/>
</dbReference>
<gene>
    <name type="ordered locus">BCAH820_4710</name>
</gene>
<sequence length="153" mass="15998">MISQSTLFLFILLIIGLIAKNQSLTVAIGVLFLLKFTFLGDKVFPYLQTKGINLGVTVITIAVLVPIATGEIGFKQLGEAAKSYYAWIALASGVAVALLAKGGVQLLTTDPHITTALVFGTIIAVALFNGVAVGPLIGAGIAYAVMSIIQMFK</sequence>
<keyword id="KW-1003">Cell membrane</keyword>
<keyword id="KW-0472">Membrane</keyword>
<keyword id="KW-0812">Transmembrane</keyword>
<keyword id="KW-1133">Transmembrane helix</keyword>
<evidence type="ECO:0000255" key="1">
    <source>
        <dbReference type="HAMAP-Rule" id="MF_01874"/>
    </source>
</evidence>
<proteinExistence type="inferred from homology"/>
<accession>B7JRW8</accession>
<organism>
    <name type="scientific">Bacillus cereus (strain AH820)</name>
    <dbReference type="NCBI Taxonomy" id="405535"/>
    <lineage>
        <taxon>Bacteria</taxon>
        <taxon>Bacillati</taxon>
        <taxon>Bacillota</taxon>
        <taxon>Bacilli</taxon>
        <taxon>Bacillales</taxon>
        <taxon>Bacillaceae</taxon>
        <taxon>Bacillus</taxon>
        <taxon>Bacillus cereus group</taxon>
    </lineage>
</organism>
<protein>
    <recommendedName>
        <fullName evidence="1">UPF0756 membrane protein BCAH820_4710</fullName>
    </recommendedName>
</protein>
<feature type="chain" id="PRO_0000388823" description="UPF0756 membrane protein BCAH820_4710">
    <location>
        <begin position="1"/>
        <end position="153"/>
    </location>
</feature>
<feature type="transmembrane region" description="Helical" evidence="1">
    <location>
        <begin position="8"/>
        <end position="28"/>
    </location>
</feature>
<feature type="transmembrane region" description="Helical" evidence="1">
    <location>
        <begin position="54"/>
        <end position="74"/>
    </location>
</feature>
<feature type="transmembrane region" description="Helical" evidence="1">
    <location>
        <begin position="87"/>
        <end position="107"/>
    </location>
</feature>
<feature type="transmembrane region" description="Helical" evidence="1">
    <location>
        <begin position="117"/>
        <end position="137"/>
    </location>
</feature>
<comment type="subcellular location">
    <subcellularLocation>
        <location evidence="1">Cell membrane</location>
        <topology evidence="1">Multi-pass membrane protein</topology>
    </subcellularLocation>
</comment>
<comment type="similarity">
    <text evidence="1">Belongs to the UPF0756 family.</text>
</comment>
<name>Y4710_BACC0</name>